<keyword id="KW-0025">Alternative splicing</keyword>
<keyword id="KW-0175">Coiled coil</keyword>
<keyword id="KW-1017">Isopeptide bond</keyword>
<keyword id="KW-0597">Phosphoprotein</keyword>
<keyword id="KW-1185">Reference proteome</keyword>
<keyword id="KW-0832">Ubl conjugation</keyword>
<dbReference type="EMBL" id="AC175314">
    <property type="status" value="NOT_ANNOTATED_CDS"/>
    <property type="molecule type" value="Genomic_DNA"/>
</dbReference>
<dbReference type="EMBL" id="AC184111">
    <property type="status" value="NOT_ANNOTATED_CDS"/>
    <property type="molecule type" value="Genomic_DNA"/>
</dbReference>
<dbReference type="EMBL" id="AC175490">
    <property type="status" value="NOT_ANNOTATED_CDS"/>
    <property type="molecule type" value="Genomic_DNA"/>
</dbReference>
<dbReference type="EMBL" id="AC182436">
    <property type="status" value="NOT_ANNOTATED_CDS"/>
    <property type="molecule type" value="Genomic_DNA"/>
</dbReference>
<dbReference type="EMBL" id="AC175488">
    <property type="status" value="NOT_ANNOTATED_CDS"/>
    <property type="molecule type" value="Genomic_DNA"/>
</dbReference>
<dbReference type="EMBL" id="AC144818">
    <property type="status" value="NOT_ANNOTATED_CDS"/>
    <property type="molecule type" value="Genomic_DNA"/>
</dbReference>
<dbReference type="EMBL" id="BC049818">
    <property type="protein sequence ID" value="AAH49818.1"/>
    <property type="molecule type" value="mRNA"/>
</dbReference>
<dbReference type="EMBL" id="BC115863">
    <property type="protein sequence ID" value="AAI15864.1"/>
    <property type="status" value="ALT_INIT"/>
    <property type="molecule type" value="mRNA"/>
</dbReference>
<dbReference type="EMBL" id="AK173280">
    <property type="protein sequence ID" value="BAD32558.1"/>
    <property type="molecule type" value="mRNA"/>
</dbReference>
<dbReference type="RefSeq" id="NP_001116202.2">
    <property type="nucleotide sequence ID" value="NM_001122730.2"/>
</dbReference>
<dbReference type="RefSeq" id="NP_839973.1">
    <property type="nucleotide sequence ID" value="NM_178242.2"/>
</dbReference>
<dbReference type="SMR" id="Q80WC3"/>
<dbReference type="BioGRID" id="231181">
    <property type="interactions" value="8"/>
</dbReference>
<dbReference type="FunCoup" id="Q80WC3">
    <property type="interactions" value="1880"/>
</dbReference>
<dbReference type="STRING" id="10090.ENSMUSP00000114769"/>
<dbReference type="GlyGen" id="Q80WC3">
    <property type="glycosylation" value="6 sites, 1 O-linked glycan (1 site)"/>
</dbReference>
<dbReference type="iPTMnet" id="Q80WC3"/>
<dbReference type="PhosphoSitePlus" id="Q80WC3"/>
<dbReference type="jPOST" id="Q80WC3"/>
<dbReference type="PaxDb" id="10090-ENSMUSP00000114769"/>
<dbReference type="PeptideAtlas" id="Q80WC3"/>
<dbReference type="ProteomicsDB" id="259594">
    <molecule id="Q80WC3-1"/>
</dbReference>
<dbReference type="ProteomicsDB" id="259595">
    <molecule id="Q80WC3-2"/>
</dbReference>
<dbReference type="ProteomicsDB" id="259596">
    <molecule id="Q80WC3-3"/>
</dbReference>
<dbReference type="Pumba" id="Q80WC3"/>
<dbReference type="DNASU" id="231861"/>
<dbReference type="GeneID" id="231861"/>
<dbReference type="KEGG" id="mmu:231861"/>
<dbReference type="UCSC" id="uc033inn.1">
    <molecule id="Q80WC3-1"/>
    <property type="organism name" value="mouse"/>
</dbReference>
<dbReference type="AGR" id="MGI:3648294"/>
<dbReference type="CTD" id="84629"/>
<dbReference type="MGI" id="MGI:3648294">
    <property type="gene designation" value="Tnrc18"/>
</dbReference>
<dbReference type="eggNOG" id="KOG1886">
    <property type="taxonomic scope" value="Eukaryota"/>
</dbReference>
<dbReference type="InParanoid" id="Q80WC3"/>
<dbReference type="PhylomeDB" id="Q80WC3"/>
<dbReference type="BioGRID-ORCS" id="231861">
    <property type="hits" value="4 hits in 47 CRISPR screens"/>
</dbReference>
<dbReference type="ChiTaRS" id="Tnrc18">
    <property type="organism name" value="mouse"/>
</dbReference>
<dbReference type="PRO" id="PR:Q80WC3"/>
<dbReference type="Proteomes" id="UP000000589">
    <property type="component" value="Unplaced"/>
</dbReference>
<dbReference type="RNAct" id="Q80WC3">
    <property type="molecule type" value="protein"/>
</dbReference>
<dbReference type="GO" id="GO:0003682">
    <property type="term" value="F:chromatin binding"/>
    <property type="evidence" value="ECO:0007669"/>
    <property type="project" value="InterPro"/>
</dbReference>
<dbReference type="CDD" id="cd04714">
    <property type="entry name" value="BAH_BAHCC1"/>
    <property type="match status" value="1"/>
</dbReference>
<dbReference type="FunFam" id="2.30.30.490:FF:000014">
    <property type="entry name" value="trinucleotide repeat-containing gene 18 protein-like"/>
    <property type="match status" value="1"/>
</dbReference>
<dbReference type="Gene3D" id="2.30.30.140">
    <property type="match status" value="1"/>
</dbReference>
<dbReference type="Gene3D" id="2.30.30.490">
    <property type="match status" value="1"/>
</dbReference>
<dbReference type="InterPro" id="IPR001025">
    <property type="entry name" value="BAH_dom"/>
</dbReference>
<dbReference type="InterPro" id="IPR052429">
    <property type="entry name" value="BAH_domain_protein"/>
</dbReference>
<dbReference type="InterPro" id="IPR043151">
    <property type="entry name" value="BAH_sf"/>
</dbReference>
<dbReference type="InterPro" id="IPR048924">
    <property type="entry name" value="BAHCC1-like_Tudor"/>
</dbReference>
<dbReference type="InterPro" id="IPR056841">
    <property type="entry name" value="TNRC18_BAHCC1-like_SH3"/>
</dbReference>
<dbReference type="PANTHER" id="PTHR12505">
    <property type="entry name" value="PHD FINGER TRANSCRIPTION FACTOR"/>
    <property type="match status" value="1"/>
</dbReference>
<dbReference type="PANTHER" id="PTHR12505:SF21">
    <property type="entry name" value="TRINUCLEOTIDE REPEAT-CONTAINING GENE 18 PROTEIN"/>
    <property type="match status" value="1"/>
</dbReference>
<dbReference type="Pfam" id="PF01426">
    <property type="entry name" value="BAH"/>
    <property type="match status" value="1"/>
</dbReference>
<dbReference type="Pfam" id="PF21744">
    <property type="entry name" value="BAHCC1-like_Tudor"/>
    <property type="match status" value="1"/>
</dbReference>
<dbReference type="Pfam" id="PF24912">
    <property type="entry name" value="SH3_TNRC18"/>
    <property type="match status" value="1"/>
</dbReference>
<dbReference type="SMART" id="SM00439">
    <property type="entry name" value="BAH"/>
    <property type="match status" value="1"/>
</dbReference>
<dbReference type="PROSITE" id="PS51038">
    <property type="entry name" value="BAH"/>
    <property type="match status" value="1"/>
</dbReference>
<gene>
    <name type="primary">Tnrc18</name>
    <name type="synonym">Kiaa1856</name>
    <name type="synonym">Zfp469</name>
</gene>
<reference key="1">
    <citation type="journal article" date="2009" name="PLoS Biol.">
        <title>Lineage-specific biology revealed by a finished genome assembly of the mouse.</title>
        <authorList>
            <person name="Church D.M."/>
            <person name="Goodstadt L."/>
            <person name="Hillier L.W."/>
            <person name="Zody M.C."/>
            <person name="Goldstein S."/>
            <person name="She X."/>
            <person name="Bult C.J."/>
            <person name="Agarwala R."/>
            <person name="Cherry J.L."/>
            <person name="DiCuccio M."/>
            <person name="Hlavina W."/>
            <person name="Kapustin Y."/>
            <person name="Meric P."/>
            <person name="Maglott D."/>
            <person name="Birtle Z."/>
            <person name="Marques A.C."/>
            <person name="Graves T."/>
            <person name="Zhou S."/>
            <person name="Teague B."/>
            <person name="Potamousis K."/>
            <person name="Churas C."/>
            <person name="Place M."/>
            <person name="Herschleb J."/>
            <person name="Runnheim R."/>
            <person name="Forrest D."/>
            <person name="Amos-Landgraf J."/>
            <person name="Schwartz D.C."/>
            <person name="Cheng Z."/>
            <person name="Lindblad-Toh K."/>
            <person name="Eichler E.E."/>
            <person name="Ponting C.P."/>
        </authorList>
    </citation>
    <scope>NUCLEOTIDE SEQUENCE [LARGE SCALE GENOMIC DNA]</scope>
    <source>
        <strain>C57BL/6J</strain>
    </source>
</reference>
<reference key="2">
    <citation type="journal article" date="2004" name="Genome Res.">
        <title>The status, quality, and expansion of the NIH full-length cDNA project: the Mammalian Gene Collection (MGC).</title>
        <authorList>
            <consortium name="The MGC Project Team"/>
        </authorList>
    </citation>
    <scope>NUCLEOTIDE SEQUENCE [LARGE SCALE MRNA] (ISOFORM 2)</scope>
    <source>
        <tissue>Limb</tissue>
    </source>
</reference>
<reference key="3">
    <citation type="journal article" date="2004" name="DNA Res.">
        <title>Prediction of the coding sequences of mouse homologues of KIAA gene: IV. The complete nucleotide sequences of 500 mouse KIAA-homologous cDNAs identified by screening of terminal sequences of cDNA clones randomly sampled from size-fractionated libraries.</title>
        <authorList>
            <person name="Okazaki N."/>
            <person name="Kikuno R."/>
            <person name="Ohara R."/>
            <person name="Inamoto S."/>
            <person name="Koseki H."/>
            <person name="Hiraoka S."/>
            <person name="Saga Y."/>
            <person name="Seino S."/>
            <person name="Nishimura M."/>
            <person name="Kaisho T."/>
            <person name="Hoshino K."/>
            <person name="Kitamura H."/>
            <person name="Nagase T."/>
            <person name="Ohara O."/>
            <person name="Koga H."/>
        </authorList>
    </citation>
    <scope>NUCLEOTIDE SEQUENCE [LARGE SCALE MRNA] OF 630-2878 (ISOFORM 3)</scope>
    <source>
        <tissue>Embryonic tail</tissue>
    </source>
</reference>
<reference key="4">
    <citation type="journal article" date="2010" name="Cell">
        <title>A tissue-specific atlas of mouse protein phosphorylation and expression.</title>
        <authorList>
            <person name="Huttlin E.L."/>
            <person name="Jedrychowski M.P."/>
            <person name="Elias J.E."/>
            <person name="Goswami T."/>
            <person name="Rad R."/>
            <person name="Beausoleil S.A."/>
            <person name="Villen J."/>
            <person name="Haas W."/>
            <person name="Sowa M.E."/>
            <person name="Gygi S.P."/>
        </authorList>
    </citation>
    <scope>PHOSPHORYLATION [LARGE SCALE ANALYSIS] AT SER-199 AND SER-540</scope>
    <scope>IDENTIFICATION BY MASS SPECTROMETRY [LARGE SCALE ANALYSIS]</scope>
    <source>
        <tissue>Brown adipose tissue</tissue>
        <tissue>Kidney</tissue>
    </source>
</reference>
<accession>Q80WC3</accession>
<accession>Q1LZJ7</accession>
<accession>Q69Z86</accession>
<sequence>MDGRDFGPQRSVHGPPPPLLSGLAMDSHRVGAATAGRLPSSGLPGPPPPGKYMAGLNLHPHPGFSHLPSGLYPSYLHLNHLDPPSSGSPLLSQLGQPSIFDTQKDGFYLPAPGTLHAHTPSSRTPSGHSSGGPAKGSSREGTGKDRAGRGGDPPPLFGKKDPRAREEVSGPRGVVDLTQEARAEGRQDRGSSRLAERLSPFLAEVKAKGALQPSALSLCNGVVDAGLVAELGRGGAKEVARQEENARLLRRAEALLPAARPCGSPLPPPPPLPPKGPPAPPSSTPAGVYTVFREPGREHRVVAPTFVPSVEAFDERVGPIQIASQARDVRAREREPGRPGVLQGPPGSPRLERPEVLREKSSVIRSLKRPPPSDGPPAARSSRSSPDARAYLPPKELLKPEADPRPCERAPRGPSASAAQQAAKLFGLEPSRPPGPEHKWKPFELGNFATTQMAVLAAQHHHASRAEEEAAVATASKKAYLDPGGAMPRASATCGRPGADLHSAAHGPGEASAMQSLIKYSGSFAREAVAVRPGGCGKKSPFGGLGTMKPEPTPTSAGPPRAQARLTHPGVPTAGGGRQLKRDPERPESAKAFGREGSGAQGEAEVRHPPVGIAVAVARQKDSGSSSRLGPGLGDQERTLSLNNVKGHGRTDDECDRARHREDRLLGTRLDRDQEKLLRESKELADLARLHPTSCAPNGLNPNLMVTGGPTLAGSGRWSADPAAHLATNPWLPRSGSTSMWLAGHPYGLGPPSLHQGMAPAFPPGLGGSLPSAYQFVRDPQSGQLVVIPSDHLPHFAELMERAAVPPLWPALYPPGRSPLHHAQQLQLFSQQHFLRQQELLYLQQQAAQALELQRSAQLVERLKAQEHRTEMEEKISKRSLETTGKAGLSAAGPGLLPRKSAGLANGPAGSHGKAVSPPPSPRASPVTSLKAKVIQKVEDVSKPPAYTYPATPSSHPSSPPPASPPPTPGLTRKEEAPENVVEKKDLELEKETPSPFQALFTDIPPRYPFQALPPHYGRPYPFLLQPAAASDADGLAPDVPLPADGPERLALSPEDKPICLSPSKIPEPPRDSPEEEQLADREVKAEVEDIEEGPTELPPLESPLALPVPETMVAVSPAGGCGGSPLEAQALSTAGPGCREPSEVSDFAQVAEPQIELPSKTEHRMTALELGTQLTPEPLVETKEEPVEVPLDVPMEEPTTEAGPEDSLPQPSLTEPQPSLELSDCDLPVPEGQCLNLEAQEAVPAPASTCYLEETHSESLLPGLDDPLAGMNALAAAAELPQARPLPSLGPGVPAGEKLDTAPSLVLEHSFLQGITLLSEIAELELDRRGQEAADPEPNLVVRPSLESLLAASSHMLKEVLESPFSDPLKNLRLPRELNSNKKYSWMQKKEERMFAMKSSLEDMDALELDFRMRLAEVQRRYKEKQRELVKLQRRRDSGDRHEDAHRSLARRGPGRPRKRTHTLSALSPPCKRKSHSSSGKGLSSKSLLTSDDYDLGAGIRKRHKGPEEEQEALMGMGKARSRNQSWDDHDSSSDFMSQLKIKKKKMASDQEQLASKLDRALSLTKQDKLKSPFKFSDGPGGKPKTGGGCGRFLTQYDSLLGKDRKALAKGLGLSLKPSREGKHKRASKARKMEGGFQARGQPKSVHSPFASEVSSQSYNTDSDEDEDFLKNEWSAQGPSSSKLTSSLLCGMVPKNSKPATGPKLTKRGLAGPRTLKPKVVTSRKQSFCLLLREAEARSSFSDSSEEDSFDQDDSSEEEEEELEEEEEDEEEEGIGSYRLGAGEQALSPSLEESGLGLLARFAASALPSPVVGPPLSVVQLEAEQKARKKEERQSLLGTEFEYTDSESEVKVPKQSAAGLLRTKKGVGEPGQSLAAPGPGSRASGPSSPDKAKLVSEKGRKARKIRGPKEPGFEAGPEASDDDLWTRRRSERIFLHDASAAVQATSNTAPATKPSRCGRGGAPSPRKDTGRAKDRKDPRKKKRGKEAGSAATLPPPRVSTLPDSRAPHPGALATAKRSKAKARGKEAKKENRGKGGAVSKLMECMAAEEDFEANQDSSFSEDEHLPRGGATERPLTPAPRSCIIDKEELKDGLRVLIPLDDKLLYAGHVQTVHSPDIYRVVVEGERGNRPHIYCLEQLLQEAIIDVRPASTRFLPQGTRIAAYWSQQYRCLYPGTVVRGLLDLEDDGDLITVEFDDGDTGRIPLSHIRLLPPDYKIQCAEPSPALLVPSAKRRSRKTSKDTGEVKEGAATGPQEATGGKARGRGRKPSTKAKADRAVVLEEGAATNEVPSAPLALEPISTPNSKKSTPEPVDKRARAPKARSISAQPSPVPPTFSSCPAPEPFGELPTPATAPLVTMPVTMPATRPKPKKARAAEGSGAKGPRRPGEDDELLVKLDHEGVMSPKSKKAKEALLLREDPGPGGWPESTGLLSLGSYSPAVGSSEPKATWPKGLDGDLTQEPGPGLPLEDPGNSKNPDKAQAEQDGAEESETTSSSSSSSSSSSSSSSSSSSSSSSSSGSETEGEEDAEKNREDGRGAGGRTCSAASSRASSPASSSSSSSSSSSSSSSSSSSSSSSSTTDEDSSCSSDEEAAPAPAAGPSTQPALPTKVSKPPSKARSSAHSPGKKAPTTTQPPPQPPPQPQQTLQPKTQAGAGAKSRPKKREGVHLPTTKELAKRQRLPSVENRPKIAAFLPARQLWKWFGKPTQRRGMKGKARKLFYKAIVRGKEMIRIGDCAVFLSAGRPNLPYIGRIQSMWESWGNNMVVRVKWFYHPEETSPGKQFHEGQHWDQKSGHSLPAALRASSQRKDFMERALYQSSHVDENDVQTVSHKCLVVGLEQYEQMLKTKKYQDSEGLYYLAGTYEPTTGMIFSTDGVPVLC</sequence>
<comment type="alternative products">
    <event type="alternative splicing"/>
    <isoform>
        <id>Q80WC3-1</id>
        <name>1</name>
        <sequence type="displayed"/>
    </isoform>
    <isoform>
        <id>Q80WC3-2</id>
        <name>2</name>
        <sequence type="described" ref="VSP_033133 VSP_033134"/>
    </isoform>
    <isoform>
        <id>Q80WC3-3</id>
        <name>3</name>
        <sequence type="described" ref="VSP_033130 VSP_033131 VSP_033132"/>
    </isoform>
</comment>
<comment type="miscellaneous">
    <molecule>Isoform 3</molecule>
    <text evidence="7">Incomplete sequence.</text>
</comment>
<comment type="caution">
    <text evidence="7">Gene prediction inferred by homology with the human sequence. First thought to be the product of 2 distinct genes Tnrc18 and Zfp469.</text>
</comment>
<comment type="sequence caution" evidence="7">
    <conflict type="erroneous initiation">
        <sequence resource="EMBL-CDS" id="AAI15864"/>
    </conflict>
</comment>
<organism>
    <name type="scientific">Mus musculus</name>
    <name type="common">Mouse</name>
    <dbReference type="NCBI Taxonomy" id="10090"/>
    <lineage>
        <taxon>Eukaryota</taxon>
        <taxon>Metazoa</taxon>
        <taxon>Chordata</taxon>
        <taxon>Craniata</taxon>
        <taxon>Vertebrata</taxon>
        <taxon>Euteleostomi</taxon>
        <taxon>Mammalia</taxon>
        <taxon>Eutheria</taxon>
        <taxon>Euarchontoglires</taxon>
        <taxon>Glires</taxon>
        <taxon>Rodentia</taxon>
        <taxon>Myomorpha</taxon>
        <taxon>Muroidea</taxon>
        <taxon>Muridae</taxon>
        <taxon>Murinae</taxon>
        <taxon>Mus</taxon>
        <taxon>Mus</taxon>
    </lineage>
</organism>
<feature type="chain" id="PRO_0000330826" description="Trinucleotide repeat-containing gene 18 protein">
    <location>
        <begin position="1"/>
        <end position="2878"/>
    </location>
</feature>
<feature type="domain" description="BAH" evidence="3">
    <location>
        <begin position="2727"/>
        <end position="2872"/>
    </location>
</feature>
<feature type="region of interest" description="Disordered" evidence="4">
    <location>
        <begin position="1"/>
        <end position="54"/>
    </location>
</feature>
<feature type="region of interest" description="Disordered" evidence="4">
    <location>
        <begin position="102"/>
        <end position="194"/>
    </location>
</feature>
<feature type="region of interest" description="Disordered" evidence="4">
    <location>
        <begin position="259"/>
        <end position="289"/>
    </location>
</feature>
<feature type="region of interest" description="Disordered" evidence="4">
    <location>
        <begin position="313"/>
        <end position="442"/>
    </location>
</feature>
<feature type="region of interest" description="Disordered" evidence="4">
    <location>
        <begin position="487"/>
        <end position="507"/>
    </location>
</feature>
<feature type="region of interest" description="Disordered" evidence="4">
    <location>
        <begin position="540"/>
        <end position="655"/>
    </location>
</feature>
<feature type="region of interest" description="Disordered" evidence="4">
    <location>
        <begin position="865"/>
        <end position="1002"/>
    </location>
</feature>
<feature type="region of interest" description="Disordered" evidence="4">
    <location>
        <begin position="1033"/>
        <end position="1104"/>
    </location>
</feature>
<feature type="region of interest" description="Disordered" evidence="4">
    <location>
        <begin position="1127"/>
        <end position="1146"/>
    </location>
</feature>
<feature type="region of interest" description="Disordered" evidence="4">
    <location>
        <begin position="1171"/>
        <end position="1228"/>
    </location>
</feature>
<feature type="region of interest" description="Disordered" evidence="4">
    <location>
        <begin position="1429"/>
        <end position="1535"/>
    </location>
</feature>
<feature type="region of interest" description="Disordered" evidence="4">
    <location>
        <begin position="1613"/>
        <end position="1668"/>
    </location>
</feature>
<feature type="region of interest" description="Disordered" evidence="4">
    <location>
        <begin position="1694"/>
        <end position="1718"/>
    </location>
</feature>
<feature type="region of interest" description="Disordered" evidence="4">
    <location>
        <begin position="1737"/>
        <end position="1787"/>
    </location>
</feature>
<feature type="region of interest" description="Disordered" evidence="4">
    <location>
        <begin position="1825"/>
        <end position="2040"/>
    </location>
</feature>
<feature type="region of interest" description="Disordered" evidence="4">
    <location>
        <begin position="2052"/>
        <end position="2080"/>
    </location>
</feature>
<feature type="region of interest" description="Disordered" evidence="4">
    <location>
        <begin position="2226"/>
        <end position="2681"/>
    </location>
</feature>
<feature type="coiled-coil region" evidence="2">
    <location>
        <begin position="1410"/>
        <end position="1442"/>
    </location>
</feature>
<feature type="compositionally biased region" description="Polar residues" evidence="4">
    <location>
        <begin position="119"/>
        <end position="128"/>
    </location>
</feature>
<feature type="compositionally biased region" description="Basic and acidic residues" evidence="4">
    <location>
        <begin position="137"/>
        <end position="149"/>
    </location>
</feature>
<feature type="compositionally biased region" description="Basic and acidic residues" evidence="4">
    <location>
        <begin position="158"/>
        <end position="169"/>
    </location>
</feature>
<feature type="compositionally biased region" description="Basic and acidic residues" evidence="4">
    <location>
        <begin position="179"/>
        <end position="194"/>
    </location>
</feature>
<feature type="compositionally biased region" description="Pro residues" evidence="4">
    <location>
        <begin position="264"/>
        <end position="283"/>
    </location>
</feature>
<feature type="compositionally biased region" description="Basic and acidic residues" evidence="4">
    <location>
        <begin position="327"/>
        <end position="337"/>
    </location>
</feature>
<feature type="compositionally biased region" description="Basic and acidic residues" evidence="4">
    <location>
        <begin position="350"/>
        <end position="362"/>
    </location>
</feature>
<feature type="compositionally biased region" description="Low complexity" evidence="4">
    <location>
        <begin position="376"/>
        <end position="390"/>
    </location>
</feature>
<feature type="compositionally biased region" description="Basic and acidic residues" evidence="4">
    <location>
        <begin position="396"/>
        <end position="411"/>
    </location>
</feature>
<feature type="compositionally biased region" description="Basic and acidic residues" evidence="4">
    <location>
        <begin position="580"/>
        <end position="589"/>
    </location>
</feature>
<feature type="compositionally biased region" description="Basic and acidic residues" evidence="4">
    <location>
        <begin position="865"/>
        <end position="881"/>
    </location>
</feature>
<feature type="compositionally biased region" description="Pro residues" evidence="4">
    <location>
        <begin position="958"/>
        <end position="969"/>
    </location>
</feature>
<feature type="compositionally biased region" description="Basic and acidic residues" evidence="4">
    <location>
        <begin position="972"/>
        <end position="993"/>
    </location>
</feature>
<feature type="compositionally biased region" description="Basic and acidic residues" evidence="4">
    <location>
        <begin position="1068"/>
        <end position="1088"/>
    </location>
</feature>
<feature type="compositionally biased region" description="Basic and acidic residues" evidence="4">
    <location>
        <begin position="1429"/>
        <end position="1448"/>
    </location>
</feature>
<feature type="compositionally biased region" description="Basic residues" evidence="4">
    <location>
        <begin position="1449"/>
        <end position="1463"/>
    </location>
</feature>
<feature type="compositionally biased region" description="Low complexity" evidence="4">
    <location>
        <begin position="1478"/>
        <end position="1492"/>
    </location>
</feature>
<feature type="compositionally biased region" description="Acidic residues" evidence="4">
    <location>
        <begin position="1745"/>
        <end position="1775"/>
    </location>
</feature>
<feature type="compositionally biased region" description="Basic and acidic residues" evidence="4">
    <location>
        <begin position="1825"/>
        <end position="1835"/>
    </location>
</feature>
<feature type="compositionally biased region" description="Low complexity" evidence="4">
    <location>
        <begin position="1876"/>
        <end position="1890"/>
    </location>
</feature>
<feature type="compositionally biased region" description="Basic and acidic residues" evidence="4">
    <location>
        <begin position="1891"/>
        <end position="1900"/>
    </location>
</feature>
<feature type="compositionally biased region" description="Basic and acidic residues" evidence="4">
    <location>
        <begin position="1925"/>
        <end position="1936"/>
    </location>
</feature>
<feature type="compositionally biased region" description="Basic and acidic residues" evidence="4">
    <location>
        <begin position="1966"/>
        <end position="1978"/>
    </location>
</feature>
<feature type="compositionally biased region" description="Basic and acidic residues" evidence="4">
    <location>
        <begin position="2024"/>
        <end position="2034"/>
    </location>
</feature>
<feature type="compositionally biased region" description="Basic and acidic residues" evidence="4">
    <location>
        <begin position="2238"/>
        <end position="2247"/>
    </location>
</feature>
<feature type="compositionally biased region" description="Basic residues" evidence="4">
    <location>
        <begin position="2261"/>
        <end position="2270"/>
    </location>
</feature>
<feature type="compositionally biased region" description="Basic and acidic residues" evidence="4">
    <location>
        <begin position="2307"/>
        <end position="2316"/>
    </location>
</feature>
<feature type="compositionally biased region" description="Basic and acidic residues" evidence="4">
    <location>
        <begin position="2409"/>
        <end position="2419"/>
    </location>
</feature>
<feature type="compositionally biased region" description="Low complexity" evidence="4">
    <location>
        <begin position="2460"/>
        <end position="2470"/>
    </location>
</feature>
<feature type="compositionally biased region" description="Low complexity" evidence="4">
    <location>
        <begin position="2491"/>
        <end position="2520"/>
    </location>
</feature>
<feature type="compositionally biased region" description="Low complexity" evidence="4">
    <location>
        <begin position="2540"/>
        <end position="2578"/>
    </location>
</feature>
<feature type="compositionally biased region" description="Acidic residues" evidence="4">
    <location>
        <begin position="2579"/>
        <end position="2591"/>
    </location>
</feature>
<feature type="compositionally biased region" description="Pro residues" evidence="4">
    <location>
        <begin position="2631"/>
        <end position="2641"/>
    </location>
</feature>
<feature type="modified residue" description="Phosphoserine" evidence="8">
    <location>
        <position position="199"/>
    </location>
</feature>
<feature type="modified residue" description="Phosphoserine" evidence="8">
    <location>
        <position position="540"/>
    </location>
</feature>
<feature type="modified residue" description="Phosphoserine" evidence="1">
    <location>
        <position position="1053"/>
    </location>
</feature>
<feature type="modified residue" description="Phosphoserine" evidence="1">
    <location>
        <position position="1062"/>
    </location>
</feature>
<feature type="modified residue" description="Phosphoserine" evidence="1">
    <location>
        <position position="1469"/>
    </location>
</feature>
<feature type="modified residue" description="Phosphoserine" evidence="1">
    <location>
        <position position="1789"/>
    </location>
</feature>
<feature type="modified residue" description="Phosphoserine" evidence="1">
    <location>
        <position position="1795"/>
    </location>
</feature>
<feature type="modified residue" description="Phosphothreonine" evidence="1">
    <location>
        <position position="2077"/>
    </location>
</feature>
<feature type="modified residue" description="Phosphoserine" evidence="1">
    <location>
        <position position="2681"/>
    </location>
</feature>
<feature type="cross-link" description="Glycyl lysine isopeptide (Lys-Gly) (interchain with G-Cter in SUMO2)" evidence="1">
    <location>
        <position position="549"/>
    </location>
</feature>
<feature type="splice variant" id="VSP_033130" description="In isoform 3." evidence="5">
    <location>
        <begin position="1"/>
        <end position="629"/>
    </location>
</feature>
<feature type="splice variant" id="VSP_033131" description="In isoform 3." evidence="5">
    <location>
        <begin position="1440"/>
        <end position="1482"/>
    </location>
</feature>
<feature type="splice variant" id="VSP_033132" description="In isoform 3." evidence="5">
    <location>
        <begin position="1566"/>
        <end position="2710"/>
    </location>
</feature>
<feature type="splice variant" id="VSP_033133" description="In isoform 2." evidence="6">
    <original>DD</original>
    <variation>GY</variation>
    <location>
        <begin position="1754"/>
        <end position="1755"/>
    </location>
</feature>
<feature type="splice variant" id="VSP_033134" description="In isoform 2." evidence="6">
    <location>
        <begin position="1756"/>
        <end position="2878"/>
    </location>
</feature>
<feature type="sequence conflict" description="In Ref. 2; AAI15864." evidence="7" ref="2">
    <original>L</original>
    <variation>Q</variation>
    <location>
        <position position="670"/>
    </location>
</feature>
<feature type="sequence conflict" description="In Ref. 2; AAI15864 and 3; BAD32558." evidence="7" ref="2 3">
    <original>V</original>
    <variation>VQ</variation>
    <location>
        <position position="860"/>
    </location>
</feature>
<feature type="sequence conflict" description="In Ref. 2; AAI15864." evidence="7" ref="2">
    <original>P</original>
    <variation>A</variation>
    <location>
        <position position="965"/>
    </location>
</feature>
<feature type="sequence conflict" description="In Ref. 3; BAD32558." evidence="7" ref="3">
    <original>S</original>
    <variation>F</variation>
    <location>
        <position position="1564"/>
    </location>
</feature>
<protein>
    <recommendedName>
        <fullName>Trinucleotide repeat-containing gene 18 protein</fullName>
    </recommendedName>
    <alternativeName>
        <fullName>Zinc finger protein 469</fullName>
    </alternativeName>
</protein>
<evidence type="ECO:0000250" key="1">
    <source>
        <dbReference type="UniProtKB" id="O15417"/>
    </source>
</evidence>
<evidence type="ECO:0000255" key="2"/>
<evidence type="ECO:0000255" key="3">
    <source>
        <dbReference type="PROSITE-ProRule" id="PRU00370"/>
    </source>
</evidence>
<evidence type="ECO:0000256" key="4">
    <source>
        <dbReference type="SAM" id="MobiDB-lite"/>
    </source>
</evidence>
<evidence type="ECO:0000303" key="5">
    <source>
    </source>
</evidence>
<evidence type="ECO:0000303" key="6">
    <source>
    </source>
</evidence>
<evidence type="ECO:0000305" key="7"/>
<evidence type="ECO:0007744" key="8">
    <source>
    </source>
</evidence>
<name>TNC18_MOUSE</name>
<proteinExistence type="evidence at protein level"/>